<proteinExistence type="inferred from homology"/>
<accession>Q3M6T3</accession>
<sequence length="345" mass="36751">MENTLGLEIIEVVEQAAIASAKWMGKGEKNTADQVAVEAMRERMNKIYMRGRIVIGEGERDDAPMLYIGEEVGICTQPNADQLCNPDELVEIDIAVDPCEGTNLVAYGQPGSMAVLAISEKGGLFAAPDFYMKKLAAPPAAKGKVDINKSATENLKILSECLDRAIDELVVVVMKRDRHQGLIKEIRDAGARVQLISDGDVGAAISCGFAGTNIHALMGIGAAPEGVISAAAMRALGGHFQGQLIYDPEVVKTGLIGESKEANLERLSSMGINDPDKVYDAHELASGETVLFAACGITSGNLMQGVRFFHGGARTQSLVISSQSQTARFVDTIHMAGQPKTVQLH</sequence>
<gene>
    <name type="ordered locus">Ava_3697</name>
</gene>
<comment type="function">
    <text evidence="1">Catalyzes the hydrolysis of fructose 1,6-bisphosphate (Fru 1,6-P2) and sedoheptulose 1,7-bisphosphate (Sed 1,7-P2) to fructose 6-phosphate and sedoheptulose 7-phosphate, respectively.</text>
</comment>
<comment type="catalytic activity">
    <reaction>
        <text>beta-D-fructose 1,6-bisphosphate + H2O = beta-D-fructose 6-phosphate + phosphate</text>
        <dbReference type="Rhea" id="RHEA:11064"/>
        <dbReference type="ChEBI" id="CHEBI:15377"/>
        <dbReference type="ChEBI" id="CHEBI:32966"/>
        <dbReference type="ChEBI" id="CHEBI:43474"/>
        <dbReference type="ChEBI" id="CHEBI:57634"/>
        <dbReference type="EC" id="3.1.3.11"/>
    </reaction>
</comment>
<comment type="catalytic activity">
    <reaction>
        <text>D-sedoheptulose 1,7-bisphosphate + H2O = D-sedoheptulose 7-phosphate + phosphate</text>
        <dbReference type="Rhea" id="RHEA:17461"/>
        <dbReference type="ChEBI" id="CHEBI:15377"/>
        <dbReference type="ChEBI" id="CHEBI:43474"/>
        <dbReference type="ChEBI" id="CHEBI:57483"/>
        <dbReference type="ChEBI" id="CHEBI:58335"/>
        <dbReference type="EC" id="3.1.3.37"/>
    </reaction>
</comment>
<comment type="cofactor">
    <cofactor evidence="1">
        <name>Mn(2+)</name>
        <dbReference type="ChEBI" id="CHEBI:29035"/>
    </cofactor>
</comment>
<comment type="pathway">
    <text>Carbohydrate biosynthesis; Calvin cycle.</text>
</comment>
<comment type="subunit">
    <text evidence="1">Homotetramer.</text>
</comment>
<comment type="similarity">
    <text evidence="2">Belongs to the FBPase class 2 family.</text>
</comment>
<reference key="1">
    <citation type="journal article" date="2014" name="Stand. Genomic Sci.">
        <title>Complete genome sequence of Anabaena variabilis ATCC 29413.</title>
        <authorList>
            <person name="Thiel T."/>
            <person name="Pratte B.S."/>
            <person name="Zhong J."/>
            <person name="Goodwin L."/>
            <person name="Copeland A."/>
            <person name="Lucas S."/>
            <person name="Han C."/>
            <person name="Pitluck S."/>
            <person name="Land M.L."/>
            <person name="Kyrpides N.C."/>
            <person name="Woyke T."/>
        </authorList>
    </citation>
    <scope>NUCLEOTIDE SEQUENCE [LARGE SCALE GENOMIC DNA]</scope>
    <source>
        <strain>ATCC 29413 / PCC 7937</strain>
    </source>
</reference>
<feature type="chain" id="PRO_0000342709" description="D-fructose 1,6-bisphosphatase class 2/sedoheptulose 1,7-bisphosphatase">
    <location>
        <begin position="1"/>
        <end position="345"/>
    </location>
</feature>
<feature type="binding site" evidence="1">
    <location>
        <position position="33"/>
    </location>
    <ligand>
        <name>Mn(2+)</name>
        <dbReference type="ChEBI" id="CHEBI:29035"/>
        <label>1</label>
    </ligand>
</feature>
<feature type="binding site" evidence="1">
    <location>
        <position position="57"/>
    </location>
    <ligand>
        <name>Mn(2+)</name>
        <dbReference type="ChEBI" id="CHEBI:29035"/>
        <label>1</label>
    </ligand>
</feature>
<feature type="binding site" evidence="1">
    <location>
        <position position="97"/>
    </location>
    <ligand>
        <name>Mn(2+)</name>
        <dbReference type="ChEBI" id="CHEBI:29035"/>
        <label>2</label>
    </ligand>
</feature>
<feature type="binding site" evidence="1">
    <location>
        <begin position="100"/>
        <end position="102"/>
    </location>
    <ligand>
        <name>substrate</name>
    </ligand>
</feature>
<feature type="binding site" evidence="1">
    <location>
        <position position="100"/>
    </location>
    <ligand>
        <name>Mn(2+)</name>
        <dbReference type="ChEBI" id="CHEBI:29035"/>
        <label>2</label>
    </ligand>
</feature>
<feature type="binding site" evidence="1">
    <location>
        <position position="131"/>
    </location>
    <ligand>
        <name>substrate</name>
    </ligand>
</feature>
<feature type="binding site" evidence="1">
    <location>
        <begin position="176"/>
        <end position="178"/>
    </location>
    <ligand>
        <name>substrate</name>
    </ligand>
</feature>
<feature type="binding site" evidence="1">
    <location>
        <begin position="198"/>
        <end position="200"/>
    </location>
    <ligand>
        <name>substrate</name>
    </ligand>
</feature>
<feature type="binding site" evidence="1">
    <location>
        <position position="225"/>
    </location>
    <ligand>
        <name>Mn(2+)</name>
        <dbReference type="ChEBI" id="CHEBI:29035"/>
        <label>2</label>
    </ligand>
</feature>
<evidence type="ECO:0000250" key="1"/>
<evidence type="ECO:0000305" key="2"/>
<dbReference type="EC" id="3.1.3.11"/>
<dbReference type="EC" id="3.1.3.37"/>
<dbReference type="EMBL" id="CP000117">
    <property type="protein sequence ID" value="ABA23303.1"/>
    <property type="molecule type" value="Genomic_DNA"/>
</dbReference>
<dbReference type="SMR" id="Q3M6T3"/>
<dbReference type="STRING" id="240292.Ava_3697"/>
<dbReference type="KEGG" id="ava:Ava_3697"/>
<dbReference type="eggNOG" id="COG1494">
    <property type="taxonomic scope" value="Bacteria"/>
</dbReference>
<dbReference type="HOGENOM" id="CLU_054938_0_0_3"/>
<dbReference type="UniPathway" id="UPA00116"/>
<dbReference type="Proteomes" id="UP000002533">
    <property type="component" value="Chromosome"/>
</dbReference>
<dbReference type="GO" id="GO:0005829">
    <property type="term" value="C:cytosol"/>
    <property type="evidence" value="ECO:0007669"/>
    <property type="project" value="TreeGrafter"/>
</dbReference>
<dbReference type="GO" id="GO:0042132">
    <property type="term" value="F:fructose 1,6-bisphosphate 1-phosphatase activity"/>
    <property type="evidence" value="ECO:0007669"/>
    <property type="project" value="UniProtKB-EC"/>
</dbReference>
<dbReference type="GO" id="GO:0046872">
    <property type="term" value="F:metal ion binding"/>
    <property type="evidence" value="ECO:0007669"/>
    <property type="project" value="UniProtKB-KW"/>
</dbReference>
<dbReference type="GO" id="GO:0050278">
    <property type="term" value="F:sedoheptulose-bisphosphatase activity"/>
    <property type="evidence" value="ECO:0007669"/>
    <property type="project" value="UniProtKB-EC"/>
</dbReference>
<dbReference type="GO" id="GO:0030388">
    <property type="term" value="P:fructose 1,6-bisphosphate metabolic process"/>
    <property type="evidence" value="ECO:0007669"/>
    <property type="project" value="TreeGrafter"/>
</dbReference>
<dbReference type="GO" id="GO:0006094">
    <property type="term" value="P:gluconeogenesis"/>
    <property type="evidence" value="ECO:0007669"/>
    <property type="project" value="InterPro"/>
</dbReference>
<dbReference type="GO" id="GO:0006071">
    <property type="term" value="P:glycerol metabolic process"/>
    <property type="evidence" value="ECO:0007669"/>
    <property type="project" value="InterPro"/>
</dbReference>
<dbReference type="GO" id="GO:0019253">
    <property type="term" value="P:reductive pentose-phosphate cycle"/>
    <property type="evidence" value="ECO:0007669"/>
    <property type="project" value="UniProtKB-UniPathway"/>
</dbReference>
<dbReference type="CDD" id="cd01516">
    <property type="entry name" value="FBPase_glpX"/>
    <property type="match status" value="1"/>
</dbReference>
<dbReference type="FunFam" id="3.40.190.90:FF:000001">
    <property type="entry name" value="Fructose-1,6-bisphosphatase"/>
    <property type="match status" value="1"/>
</dbReference>
<dbReference type="Gene3D" id="3.40.190.90">
    <property type="match status" value="1"/>
</dbReference>
<dbReference type="Gene3D" id="3.30.540.10">
    <property type="entry name" value="Fructose-1,6-Bisphosphatase, subunit A, domain 1"/>
    <property type="match status" value="1"/>
</dbReference>
<dbReference type="InterPro" id="IPR004464">
    <property type="entry name" value="FBPase_class-2/SBPase"/>
</dbReference>
<dbReference type="NCBIfam" id="TIGR00330">
    <property type="entry name" value="glpX"/>
    <property type="match status" value="1"/>
</dbReference>
<dbReference type="PANTHER" id="PTHR30447:SF0">
    <property type="entry name" value="FRUCTOSE-1,6-BISPHOSPHATASE 1 CLASS 2-RELATED"/>
    <property type="match status" value="1"/>
</dbReference>
<dbReference type="PANTHER" id="PTHR30447">
    <property type="entry name" value="FRUCTOSE-1,6-BISPHOSPHATASE CLASS 2"/>
    <property type="match status" value="1"/>
</dbReference>
<dbReference type="Pfam" id="PF03320">
    <property type="entry name" value="FBPase_glpX"/>
    <property type="match status" value="1"/>
</dbReference>
<dbReference type="PIRSF" id="PIRSF004532">
    <property type="entry name" value="GlpX"/>
    <property type="match status" value="1"/>
</dbReference>
<dbReference type="SUPFAM" id="SSF56655">
    <property type="entry name" value="Carbohydrate phosphatase"/>
    <property type="match status" value="1"/>
</dbReference>
<organism>
    <name type="scientific">Trichormus variabilis (strain ATCC 29413 / PCC 7937)</name>
    <name type="common">Anabaena variabilis</name>
    <dbReference type="NCBI Taxonomy" id="240292"/>
    <lineage>
        <taxon>Bacteria</taxon>
        <taxon>Bacillati</taxon>
        <taxon>Cyanobacteriota</taxon>
        <taxon>Cyanophyceae</taxon>
        <taxon>Nostocales</taxon>
        <taxon>Nostocaceae</taxon>
        <taxon>Trichormus</taxon>
    </lineage>
</organism>
<keyword id="KW-0113">Calvin cycle</keyword>
<keyword id="KW-0119">Carbohydrate metabolism</keyword>
<keyword id="KW-0378">Hydrolase</keyword>
<keyword id="KW-0464">Manganese</keyword>
<keyword id="KW-0479">Metal-binding</keyword>
<name>FBSB_TRIV2</name>
<protein>
    <recommendedName>
        <fullName>D-fructose 1,6-bisphosphatase class 2/sedoheptulose 1,7-bisphosphatase</fullName>
        <shortName>FBPase class 2/SBPase</shortName>
        <ecNumber>3.1.3.11</ecNumber>
        <ecNumber>3.1.3.37</ecNumber>
    </recommendedName>
</protein>